<evidence type="ECO:0000250" key="1"/>
<evidence type="ECO:0000255" key="2">
    <source>
        <dbReference type="HAMAP-Rule" id="MF_03047"/>
    </source>
</evidence>
<evidence type="ECO:0000256" key="3">
    <source>
        <dbReference type="SAM" id="MobiDB-lite"/>
    </source>
</evidence>
<name>SG112_DROGR</name>
<proteinExistence type="inferred from homology"/>
<sequence>MANSNTNQLHPLGATTSQTFITALNHTAASTIAINFRELIKEPKELDEASNYLYQALLDDVVAGIFIETHHLRKTGNLAALDGVGEENLESAFHICEMPNLDIFGISTAKKQMDCTCPNCDRLVAAARFAPHLEKCMGMGRISSRIASRRLATKEGSSASTSSTSTYLQSGGNTGGTDDEDDVDWSSDKRKKKSTQSSRNNGSKKNNGKTF</sequence>
<reference key="1">
    <citation type="journal article" date="2007" name="Nature">
        <title>Evolution of genes and genomes on the Drosophila phylogeny.</title>
        <authorList>
            <consortium name="Drosophila 12 genomes consortium"/>
        </authorList>
    </citation>
    <scope>NUCLEOTIDE SEQUENCE [LARGE SCALE GENOMIC DNA]</scope>
    <source>
        <strain>Tucson 15287-2541.00</strain>
    </source>
</reference>
<gene>
    <name evidence="2" type="primary">Sgf11-2</name>
    <name type="ORF">GH17199</name>
</gene>
<comment type="function">
    <text evidence="2">Component of the transcription regulatory histone acetylation (HAT) complex SAGA, a multiprotein complex that activates transcription by remodeling chromatin and mediating histone acetylation and deubiquitination. Within the SAGA complex, participates in a subcomplex that specifically deubiquitinates histone H2B. The SAGA complex is recruited to specific gene promoters by activators, where it is required for transcription. Required for nuclear receptor-mediated transactivation. Binds independently on SAGA to promoters in an RNA-dependent manner. Binds to mRNA and is essential for total mRNA export from the nucleus. Required to counteract heterochromatin silencing. Controls the development of neuronal connectivity in visual system by being required for accurate axon targeting in the optic lobe. Required for expression of ecdysone-induced genes such as br/broad.</text>
</comment>
<comment type="subunit">
    <text evidence="2">Component of some SAGA transcription coactivator-HAT complexes, at least composed of Ada2b, not/nonstop, Pcaf/Gcn5, Sgf11 and Spt3. Within the SAGA complex, Sgf11, e(y)2, and not/nonstop form an additional subcomplex of SAGA called the DUB module (deubiquitination module). Interacts directly with not/nonstop. Interacts with the AMEX complex component xmas-2. Interacts with Cbp80; important for promoter recruitment of Sgf11 that is not associated with the DUB module.</text>
</comment>
<comment type="subcellular location">
    <subcellularLocation>
        <location evidence="2">Nucleus</location>
        <location evidence="2">Nucleoplasm</location>
    </subcellularLocation>
    <subcellularLocation>
        <location evidence="2">Cytoplasm</location>
    </subcellularLocation>
    <text evidence="2">Localizes to nuclear periphery, in contact with the nuclear pore complex (NPC).</text>
</comment>
<comment type="domain">
    <text evidence="2">The long N-terminal helix forms part of the 'assembly lobe' of the SAGA deubiquitination module.</text>
</comment>
<comment type="domain">
    <text evidence="2">The C-terminal SGF11-type zinc-finger domain together with the C-terminal catalytic domain of not/nonstop forms the 'catalytic lobe' of the SAGA deubiquitination module.</text>
</comment>
<comment type="similarity">
    <text evidence="2">Belongs to the SGF11 family.</text>
</comment>
<protein>
    <recommendedName>
        <fullName evidence="2">SAGA-associated factor 11 homolog 2</fullName>
    </recommendedName>
</protein>
<dbReference type="EMBL" id="CH916366">
    <property type="protein sequence ID" value="EDV98025.1"/>
    <property type="molecule type" value="Genomic_DNA"/>
</dbReference>
<dbReference type="SMR" id="B4J1U5"/>
<dbReference type="FunCoup" id="B4J1U5">
    <property type="interactions" value="237"/>
</dbReference>
<dbReference type="STRING" id="7222.B4J1U5"/>
<dbReference type="EnsemblMetazoa" id="FBtr0152613">
    <property type="protein sequence ID" value="FBpp0151105"/>
    <property type="gene ID" value="FBgn0124669"/>
</dbReference>
<dbReference type="EnsemblMetazoa" id="XM_001985641.3">
    <property type="protein sequence ID" value="XP_001985677.1"/>
    <property type="gene ID" value="LOC6558802"/>
</dbReference>
<dbReference type="GeneID" id="6558802"/>
<dbReference type="KEGG" id="dgr:6558802"/>
<dbReference type="CTD" id="40035"/>
<dbReference type="eggNOG" id="KOG2612">
    <property type="taxonomic scope" value="Eukaryota"/>
</dbReference>
<dbReference type="HOGENOM" id="CLU_100743_0_0_1"/>
<dbReference type="InParanoid" id="B4J1U5"/>
<dbReference type="OMA" id="STIEEWI"/>
<dbReference type="OrthoDB" id="21557at2759"/>
<dbReference type="PhylomeDB" id="B4J1U5"/>
<dbReference type="Proteomes" id="UP000001070">
    <property type="component" value="Unassembled WGS sequence"/>
</dbReference>
<dbReference type="GO" id="GO:0005737">
    <property type="term" value="C:cytoplasm"/>
    <property type="evidence" value="ECO:0007669"/>
    <property type="project" value="UniProtKB-SubCell"/>
</dbReference>
<dbReference type="GO" id="GO:0071819">
    <property type="term" value="C:DUBm complex"/>
    <property type="evidence" value="ECO:0007669"/>
    <property type="project" value="UniProtKB-UniRule"/>
</dbReference>
<dbReference type="GO" id="GO:0005643">
    <property type="term" value="C:nuclear pore"/>
    <property type="evidence" value="ECO:0007669"/>
    <property type="project" value="UniProtKB-UniRule"/>
</dbReference>
<dbReference type="GO" id="GO:0005654">
    <property type="term" value="C:nucleoplasm"/>
    <property type="evidence" value="ECO:0007669"/>
    <property type="project" value="UniProtKB-SubCell"/>
</dbReference>
<dbReference type="GO" id="GO:0000124">
    <property type="term" value="C:SAGA complex"/>
    <property type="evidence" value="ECO:0000250"/>
    <property type="project" value="UniProtKB"/>
</dbReference>
<dbReference type="GO" id="GO:0003713">
    <property type="term" value="F:transcription coactivator activity"/>
    <property type="evidence" value="ECO:0007669"/>
    <property type="project" value="UniProtKB-UniRule"/>
</dbReference>
<dbReference type="GO" id="GO:0008270">
    <property type="term" value="F:zinc ion binding"/>
    <property type="evidence" value="ECO:0007669"/>
    <property type="project" value="UniProtKB-UniRule"/>
</dbReference>
<dbReference type="GO" id="GO:0006325">
    <property type="term" value="P:chromatin organization"/>
    <property type="evidence" value="ECO:0000250"/>
    <property type="project" value="UniProtKB"/>
</dbReference>
<dbReference type="GO" id="GO:0006406">
    <property type="term" value="P:mRNA export from nucleus"/>
    <property type="evidence" value="ECO:0007669"/>
    <property type="project" value="UniProtKB-UniRule"/>
</dbReference>
<dbReference type="GO" id="GO:0045893">
    <property type="term" value="P:positive regulation of DNA-templated transcription"/>
    <property type="evidence" value="ECO:0000250"/>
    <property type="project" value="UniProtKB"/>
</dbReference>
<dbReference type="GO" id="GO:0015031">
    <property type="term" value="P:protein transport"/>
    <property type="evidence" value="ECO:0007669"/>
    <property type="project" value="UniProtKB-KW"/>
</dbReference>
<dbReference type="GO" id="GO:0006357">
    <property type="term" value="P:regulation of transcription by RNA polymerase II"/>
    <property type="evidence" value="ECO:0007669"/>
    <property type="project" value="TreeGrafter"/>
</dbReference>
<dbReference type="FunFam" id="3.30.160.60:FF:000118">
    <property type="entry name" value="Ataxin-7-like protein 3"/>
    <property type="match status" value="1"/>
</dbReference>
<dbReference type="Gene3D" id="3.30.160.60">
    <property type="entry name" value="Classic Zinc Finger"/>
    <property type="match status" value="1"/>
</dbReference>
<dbReference type="HAMAP" id="MF_03047">
    <property type="entry name" value="Sgf11"/>
    <property type="match status" value="1"/>
</dbReference>
<dbReference type="InterPro" id="IPR013246">
    <property type="entry name" value="SAGA_su_Sgf11"/>
</dbReference>
<dbReference type="InterPro" id="IPR051078">
    <property type="entry name" value="SGF11"/>
</dbReference>
<dbReference type="PANTHER" id="PTHR46367">
    <property type="entry name" value="ATAXIN-7-LIKE PROTEIN 3"/>
    <property type="match status" value="1"/>
</dbReference>
<dbReference type="PANTHER" id="PTHR46367:SF1">
    <property type="entry name" value="ATAXIN-7-LIKE PROTEIN 3"/>
    <property type="match status" value="1"/>
</dbReference>
<dbReference type="Pfam" id="PF08209">
    <property type="entry name" value="Sgf11"/>
    <property type="match status" value="1"/>
</dbReference>
<feature type="chain" id="PRO_0000367524" description="SAGA-associated factor 11 homolog 2">
    <location>
        <begin position="1"/>
        <end position="211"/>
    </location>
</feature>
<feature type="zinc finger region" description="SGF11-type" evidence="2">
    <location>
        <begin position="115"/>
        <end position="136"/>
    </location>
</feature>
<feature type="region of interest" description="Disordered" evidence="3">
    <location>
        <begin position="149"/>
        <end position="211"/>
    </location>
</feature>
<feature type="compositionally biased region" description="Low complexity" evidence="3">
    <location>
        <begin position="157"/>
        <end position="166"/>
    </location>
</feature>
<feature type="compositionally biased region" description="Low complexity" evidence="3">
    <location>
        <begin position="197"/>
        <end position="211"/>
    </location>
</feature>
<feature type="modified residue" description="Phosphoserine" evidence="1">
    <location>
        <position position="187"/>
    </location>
</feature>
<organism>
    <name type="scientific">Drosophila grimshawi</name>
    <name type="common">Hawaiian fruit fly</name>
    <name type="synonym">Idiomyia grimshawi</name>
    <dbReference type="NCBI Taxonomy" id="7222"/>
    <lineage>
        <taxon>Eukaryota</taxon>
        <taxon>Metazoa</taxon>
        <taxon>Ecdysozoa</taxon>
        <taxon>Arthropoda</taxon>
        <taxon>Hexapoda</taxon>
        <taxon>Insecta</taxon>
        <taxon>Pterygota</taxon>
        <taxon>Neoptera</taxon>
        <taxon>Endopterygota</taxon>
        <taxon>Diptera</taxon>
        <taxon>Brachycera</taxon>
        <taxon>Muscomorpha</taxon>
        <taxon>Ephydroidea</taxon>
        <taxon>Drosophilidae</taxon>
        <taxon>Drosophila</taxon>
        <taxon>Hawaiian Drosophila</taxon>
    </lineage>
</organism>
<accession>B4J1U5</accession>
<keyword id="KW-0010">Activator</keyword>
<keyword id="KW-0156">Chromatin regulator</keyword>
<keyword id="KW-0963">Cytoplasm</keyword>
<keyword id="KW-0479">Metal-binding</keyword>
<keyword id="KW-0509">mRNA transport</keyword>
<keyword id="KW-0539">Nucleus</keyword>
<keyword id="KW-0597">Phosphoprotein</keyword>
<keyword id="KW-0653">Protein transport</keyword>
<keyword id="KW-1185">Reference proteome</keyword>
<keyword id="KW-0804">Transcription</keyword>
<keyword id="KW-0805">Transcription regulation</keyword>
<keyword id="KW-0811">Translocation</keyword>
<keyword id="KW-0813">Transport</keyword>
<keyword id="KW-0862">Zinc</keyword>
<keyword id="KW-0863">Zinc-finger</keyword>